<protein>
    <recommendedName>
        <fullName evidence="1">Glutamyl-tRNA(Gln) amidotransferase subunit A, mitochondrial</fullName>
        <shortName evidence="1">Glu-AdT subunit A</shortName>
        <ecNumber evidence="1">6.3.5.7</ecNumber>
    </recommendedName>
</protein>
<reference key="1">
    <citation type="journal article" date="2010" name="Proc. Natl. Acad. Sci. U.S.A.">
        <title>Genome sequences of the human body louse and its primary endosymbiont provide insights into the permanent parasitic lifestyle.</title>
        <authorList>
            <person name="Kirkness E.F."/>
            <person name="Haas B.J."/>
            <person name="Sun W."/>
            <person name="Braig H.R."/>
            <person name="Perotti M.A."/>
            <person name="Clark J.M."/>
            <person name="Lee S.H."/>
            <person name="Robertson H.M."/>
            <person name="Kennedy R.C."/>
            <person name="Elhaik E."/>
            <person name="Gerlach D."/>
            <person name="Kriventseva E.V."/>
            <person name="Elsik C.G."/>
            <person name="Graur D."/>
            <person name="Hill C.A."/>
            <person name="Veenstra J.A."/>
            <person name="Walenz B."/>
            <person name="Tubio J.M."/>
            <person name="Ribeiro J.M."/>
            <person name="Rozas J."/>
            <person name="Johnston J.S."/>
            <person name="Reese J.T."/>
            <person name="Popadic A."/>
            <person name="Tojo M."/>
            <person name="Raoult D."/>
            <person name="Reed D.L."/>
            <person name="Tomoyasu Y."/>
            <person name="Krause E."/>
            <person name="Mittapalli O."/>
            <person name="Margam V.M."/>
            <person name="Li H.M."/>
            <person name="Meyer J.M."/>
            <person name="Johnson R.M."/>
            <person name="Romero-Severson J."/>
            <person name="Vanzee J.P."/>
            <person name="Alvarez-Ponce D."/>
            <person name="Vieira F.G."/>
            <person name="Aguade M."/>
            <person name="Guirao-Rico S."/>
            <person name="Anzola J.M."/>
            <person name="Yoon K.S."/>
            <person name="Strycharz J.P."/>
            <person name="Unger M.F."/>
            <person name="Christley S."/>
            <person name="Lobo N.F."/>
            <person name="Seufferheld M.J."/>
            <person name="Wang N."/>
            <person name="Dasch G.A."/>
            <person name="Struchiner C.J."/>
            <person name="Madey G."/>
            <person name="Hannick L.I."/>
            <person name="Bidwell S."/>
            <person name="Joardar V."/>
            <person name="Caler E."/>
            <person name="Shao R."/>
            <person name="Barker S.C."/>
            <person name="Cameron S."/>
            <person name="Bruggner R.V."/>
            <person name="Regier A."/>
            <person name="Johnson J."/>
            <person name="Viswanathan L."/>
            <person name="Utterback T.R."/>
            <person name="Sutton G.G."/>
            <person name="Lawson D."/>
            <person name="Waterhouse R.M."/>
            <person name="Venter J.C."/>
            <person name="Strausberg R.L."/>
            <person name="Berenbaum M.R."/>
            <person name="Collins F.H."/>
            <person name="Zdobnov E.M."/>
            <person name="Pittendrigh B.R."/>
        </authorList>
    </citation>
    <scope>NUCLEOTIDE SEQUENCE [LARGE SCALE GENOMIC DNA]</scope>
    <source>
        <strain>USDA</strain>
    </source>
</reference>
<comment type="function">
    <text evidence="1">Allows the formation of correctly charged Gln-tRNA(Gln) through the transamidation of misacylated Glu-tRNA(Gln) in the mitochondria. The reaction takes place in the presence of glutamine and ATP through an activated gamma-phospho-Glu-tRNA(Gln).</text>
</comment>
<comment type="catalytic activity">
    <reaction evidence="1">
        <text>L-glutamyl-tRNA(Gln) + L-glutamine + ATP + H2O = L-glutaminyl-tRNA(Gln) + L-glutamate + ADP + phosphate + H(+)</text>
        <dbReference type="Rhea" id="RHEA:17521"/>
        <dbReference type="Rhea" id="RHEA-COMP:9681"/>
        <dbReference type="Rhea" id="RHEA-COMP:9684"/>
        <dbReference type="ChEBI" id="CHEBI:15377"/>
        <dbReference type="ChEBI" id="CHEBI:15378"/>
        <dbReference type="ChEBI" id="CHEBI:29985"/>
        <dbReference type="ChEBI" id="CHEBI:30616"/>
        <dbReference type="ChEBI" id="CHEBI:43474"/>
        <dbReference type="ChEBI" id="CHEBI:58359"/>
        <dbReference type="ChEBI" id="CHEBI:78520"/>
        <dbReference type="ChEBI" id="CHEBI:78521"/>
        <dbReference type="ChEBI" id="CHEBI:456216"/>
        <dbReference type="EC" id="6.3.5.7"/>
    </reaction>
</comment>
<comment type="subunit">
    <text evidence="1">Subunit of the heterotrimeric GatCAB amidotransferase (AdT) complex, composed of A, B and C subunits.</text>
</comment>
<comment type="subcellular location">
    <subcellularLocation>
        <location evidence="1">Mitochondrion</location>
    </subcellularLocation>
</comment>
<comment type="similarity">
    <text evidence="1">Belongs to the amidase family. GatA subfamily.</text>
</comment>
<feature type="chain" id="PRO_0000413339" description="Glutamyl-tRNA(Gln) amidotransferase subunit A, mitochondrial">
    <location>
        <begin position="1"/>
        <end position="496"/>
    </location>
</feature>
<feature type="active site" description="Charge relay system" evidence="1">
    <location>
        <position position="75"/>
    </location>
</feature>
<feature type="active site" description="Charge relay system" evidence="1">
    <location>
        <position position="162"/>
    </location>
</feature>
<feature type="active site" description="Acyl-ester intermediate" evidence="1">
    <location>
        <position position="186"/>
    </location>
</feature>
<organism>
    <name type="scientific">Pediculus humanus subsp. corporis</name>
    <name type="common">Body louse</name>
    <dbReference type="NCBI Taxonomy" id="121224"/>
    <lineage>
        <taxon>Eukaryota</taxon>
        <taxon>Metazoa</taxon>
        <taxon>Ecdysozoa</taxon>
        <taxon>Arthropoda</taxon>
        <taxon>Hexapoda</taxon>
        <taxon>Insecta</taxon>
        <taxon>Pterygota</taxon>
        <taxon>Neoptera</taxon>
        <taxon>Paraneoptera</taxon>
        <taxon>Psocodea</taxon>
        <taxon>Phthiraptera</taxon>
        <taxon>Anoplura</taxon>
        <taxon>Pediculidae</taxon>
        <taxon>Pediculus</taxon>
    </lineage>
</organism>
<sequence>MLQTSIKKIHGKLKGSNLNTAEVIVNSFKRAEQVLELNSFISMNNNAGLQVESSNEYFKNGKPRSLLEGIPIAVKDNFCVKDTLTTCGSKMLQNFRPKYTATVVQKLLDSGAILVGKTNMDEFAMGSGTTTSIFGPTKNIWGSRFSNLCIQEKNDWFIPGGSSGGSAVAVASGICLGALGSDTGGSCRNPASYCGIVGLKPTYGLLSRYGLIPLVNSMDVPAIMALNVEDTACLLGIMMGRDENDSTTVSKNLNLALNYSSSSVKGLKIGIPAEYNCQGLSDEIRSAWNDIAKVLYQGGASIVPVSMPHTKYSIVCYSILNQCEVASNMARYDGIEFGLRSKEKGNRKNSYVTTRYSGFNEVVRSRIIAGNFFLLSSNSNKYYEKALKVRRLIADDFNNAWRKGINILLTPTTLTDAPKYSEYIKKDEREQSAIQDYCTQPANMAGCPAISIPIELSKKGFPISLQLMAPKFEEKTLLGCALYIENAVNFKNMNEQ</sequence>
<proteinExistence type="inferred from homology"/>
<dbReference type="EC" id="6.3.5.7" evidence="1"/>
<dbReference type="EMBL" id="DS235755">
    <property type="protein sequence ID" value="EEB16405.1"/>
    <property type="molecule type" value="Genomic_DNA"/>
</dbReference>
<dbReference type="RefSeq" id="XP_002429143.1">
    <property type="nucleotide sequence ID" value="XM_002429098.1"/>
</dbReference>
<dbReference type="SMR" id="E0VSP9"/>
<dbReference type="FunCoup" id="E0VSP9">
    <property type="interactions" value="719"/>
</dbReference>
<dbReference type="STRING" id="121224.E0VSP9"/>
<dbReference type="EnsemblMetazoa" id="PHUM422010-RA">
    <property type="protein sequence ID" value="PHUM422010-PA"/>
    <property type="gene ID" value="PHUM422010"/>
</dbReference>
<dbReference type="KEGG" id="phu:Phum_PHUM422010"/>
<dbReference type="CTD" id="8234523"/>
<dbReference type="VEuPathDB" id="VectorBase:PHUM422010"/>
<dbReference type="eggNOG" id="KOG1211">
    <property type="taxonomic scope" value="Eukaryota"/>
</dbReference>
<dbReference type="HOGENOM" id="CLU_009600_7_6_1"/>
<dbReference type="InParanoid" id="E0VSP9"/>
<dbReference type="OMA" id="QPASYCG"/>
<dbReference type="OrthoDB" id="421993at2759"/>
<dbReference type="PhylomeDB" id="E0VSP9"/>
<dbReference type="Proteomes" id="UP000009046">
    <property type="component" value="Unassembled WGS sequence"/>
</dbReference>
<dbReference type="GO" id="GO:0030956">
    <property type="term" value="C:glutamyl-tRNA(Gln) amidotransferase complex"/>
    <property type="evidence" value="ECO:0007669"/>
    <property type="project" value="UniProtKB-UniRule"/>
</dbReference>
<dbReference type="GO" id="GO:0005739">
    <property type="term" value="C:mitochondrion"/>
    <property type="evidence" value="ECO:0007669"/>
    <property type="project" value="UniProtKB-SubCell"/>
</dbReference>
<dbReference type="GO" id="GO:0005524">
    <property type="term" value="F:ATP binding"/>
    <property type="evidence" value="ECO:0007669"/>
    <property type="project" value="UniProtKB-KW"/>
</dbReference>
<dbReference type="GO" id="GO:0050567">
    <property type="term" value="F:glutaminyl-tRNA synthase (glutamine-hydrolyzing) activity"/>
    <property type="evidence" value="ECO:0007669"/>
    <property type="project" value="UniProtKB-UniRule"/>
</dbReference>
<dbReference type="GO" id="GO:0070681">
    <property type="term" value="P:glutaminyl-tRNAGln biosynthesis via transamidation"/>
    <property type="evidence" value="ECO:0007669"/>
    <property type="project" value="UniProtKB-UniRule"/>
</dbReference>
<dbReference type="GO" id="GO:0032543">
    <property type="term" value="P:mitochondrial translation"/>
    <property type="evidence" value="ECO:0007669"/>
    <property type="project" value="UniProtKB-UniRule"/>
</dbReference>
<dbReference type="Gene3D" id="3.90.1300.10">
    <property type="entry name" value="Amidase signature (AS) domain"/>
    <property type="match status" value="1"/>
</dbReference>
<dbReference type="HAMAP" id="MF_00120">
    <property type="entry name" value="GatA"/>
    <property type="match status" value="1"/>
</dbReference>
<dbReference type="InterPro" id="IPR000120">
    <property type="entry name" value="Amidase"/>
</dbReference>
<dbReference type="InterPro" id="IPR023631">
    <property type="entry name" value="Amidase_dom"/>
</dbReference>
<dbReference type="InterPro" id="IPR036928">
    <property type="entry name" value="AS_sf"/>
</dbReference>
<dbReference type="InterPro" id="IPR004412">
    <property type="entry name" value="GatA"/>
</dbReference>
<dbReference type="PANTHER" id="PTHR11895:SF7">
    <property type="entry name" value="GLUTAMYL-TRNA(GLN) AMIDOTRANSFERASE SUBUNIT A, MITOCHONDRIAL"/>
    <property type="match status" value="1"/>
</dbReference>
<dbReference type="PANTHER" id="PTHR11895">
    <property type="entry name" value="TRANSAMIDASE"/>
    <property type="match status" value="1"/>
</dbReference>
<dbReference type="Pfam" id="PF01425">
    <property type="entry name" value="Amidase"/>
    <property type="match status" value="1"/>
</dbReference>
<dbReference type="SUPFAM" id="SSF75304">
    <property type="entry name" value="Amidase signature (AS) enzymes"/>
    <property type="match status" value="1"/>
</dbReference>
<evidence type="ECO:0000255" key="1">
    <source>
        <dbReference type="HAMAP-Rule" id="MF_03150"/>
    </source>
</evidence>
<name>GATA_PEDHC</name>
<gene>
    <name evidence="1" type="primary">gatA</name>
    <name type="ORF">PHUM422010</name>
</gene>
<keyword id="KW-0067">ATP-binding</keyword>
<keyword id="KW-0436">Ligase</keyword>
<keyword id="KW-0496">Mitochondrion</keyword>
<keyword id="KW-0547">Nucleotide-binding</keyword>
<keyword id="KW-0648">Protein biosynthesis</keyword>
<keyword id="KW-1185">Reference proteome</keyword>
<accession>E0VSP9</accession>